<proteinExistence type="inferred from homology"/>
<geneLocation type="chloroplast"/>
<comment type="function">
    <text evidence="1">May help in the organization of the PsaE and PsaF subunits.</text>
</comment>
<comment type="subcellular location">
    <subcellularLocation>
        <location evidence="1">Plastid</location>
        <location evidence="1">Chloroplast thylakoid membrane</location>
        <topology evidence="1">Single-pass membrane protein</topology>
    </subcellularLocation>
</comment>
<comment type="similarity">
    <text evidence="1">Belongs to the PsaJ family.</text>
</comment>
<organism>
    <name type="scientific">Lemna minor</name>
    <name type="common">Common duckweed</name>
    <dbReference type="NCBI Taxonomy" id="4472"/>
    <lineage>
        <taxon>Eukaryota</taxon>
        <taxon>Viridiplantae</taxon>
        <taxon>Streptophyta</taxon>
        <taxon>Embryophyta</taxon>
        <taxon>Tracheophyta</taxon>
        <taxon>Spermatophyta</taxon>
        <taxon>Magnoliopsida</taxon>
        <taxon>Liliopsida</taxon>
        <taxon>Araceae</taxon>
        <taxon>Lemnoideae</taxon>
        <taxon>Lemna</taxon>
    </lineage>
</organism>
<gene>
    <name evidence="1" type="primary">psaJ</name>
</gene>
<accession>A9L9B6</accession>
<dbReference type="EMBL" id="DQ400350">
    <property type="protein sequence ID" value="ABD48515.1"/>
    <property type="molecule type" value="Genomic_DNA"/>
</dbReference>
<dbReference type="RefSeq" id="YP_001595528.1">
    <property type="nucleotide sequence ID" value="NC_010109.1"/>
</dbReference>
<dbReference type="SMR" id="A9L9B6"/>
<dbReference type="GeneID" id="5787578"/>
<dbReference type="GO" id="GO:0009535">
    <property type="term" value="C:chloroplast thylakoid membrane"/>
    <property type="evidence" value="ECO:0007669"/>
    <property type="project" value="UniProtKB-SubCell"/>
</dbReference>
<dbReference type="GO" id="GO:0009522">
    <property type="term" value="C:photosystem I"/>
    <property type="evidence" value="ECO:0007669"/>
    <property type="project" value="UniProtKB-KW"/>
</dbReference>
<dbReference type="GO" id="GO:0015979">
    <property type="term" value="P:photosynthesis"/>
    <property type="evidence" value="ECO:0007669"/>
    <property type="project" value="UniProtKB-UniRule"/>
</dbReference>
<dbReference type="Gene3D" id="1.20.5.510">
    <property type="entry name" value="Single helix bin"/>
    <property type="match status" value="1"/>
</dbReference>
<dbReference type="HAMAP" id="MF_00522">
    <property type="entry name" value="PSI_PsaJ"/>
    <property type="match status" value="1"/>
</dbReference>
<dbReference type="InterPro" id="IPR002615">
    <property type="entry name" value="PSI_PsaJ"/>
</dbReference>
<dbReference type="InterPro" id="IPR036062">
    <property type="entry name" value="PSI_PsaJ_sf"/>
</dbReference>
<dbReference type="PANTHER" id="PTHR36082">
    <property type="match status" value="1"/>
</dbReference>
<dbReference type="PANTHER" id="PTHR36082:SF2">
    <property type="entry name" value="PHOTOSYSTEM I REACTION CENTER SUBUNIT IX"/>
    <property type="match status" value="1"/>
</dbReference>
<dbReference type="Pfam" id="PF01701">
    <property type="entry name" value="PSI_PsaJ"/>
    <property type="match status" value="1"/>
</dbReference>
<dbReference type="SUPFAM" id="SSF81544">
    <property type="entry name" value="Subunit IX of photosystem I reaction centre, PsaJ"/>
    <property type="match status" value="1"/>
</dbReference>
<keyword id="KW-0150">Chloroplast</keyword>
<keyword id="KW-0472">Membrane</keyword>
<keyword id="KW-0602">Photosynthesis</keyword>
<keyword id="KW-0603">Photosystem I</keyword>
<keyword id="KW-0934">Plastid</keyword>
<keyword id="KW-0793">Thylakoid</keyword>
<keyword id="KW-0812">Transmembrane</keyword>
<keyword id="KW-1133">Transmembrane helix</keyword>
<name>PSAJ_LEMMI</name>
<reference key="1">
    <citation type="journal article" date="2008" name="J. Mol. Evol.">
        <title>Complete sequence of the Duckweed (Lemna minor) chloroplast genome: structural organization and phylogenetic relationships to other angiosperms.</title>
        <authorList>
            <person name="Mardanov A.V."/>
            <person name="Ravin N.V."/>
            <person name="Kuznetsov B.B."/>
            <person name="Samigullin T.H."/>
            <person name="Antonov A.S."/>
            <person name="Kolganova T.V."/>
            <person name="Skyabin K.G."/>
        </authorList>
    </citation>
    <scope>NUCLEOTIDE SEQUENCE [LARGE SCALE GENOMIC DNA]</scope>
</reference>
<protein>
    <recommendedName>
        <fullName evidence="1">Photosystem I reaction center subunit IX</fullName>
    </recommendedName>
    <alternativeName>
        <fullName evidence="1">PSI-J</fullName>
    </alternativeName>
</protein>
<feature type="chain" id="PRO_0000354153" description="Photosystem I reaction center subunit IX">
    <location>
        <begin position="1"/>
        <end position="42"/>
    </location>
</feature>
<feature type="transmembrane region" description="Helical" evidence="1">
    <location>
        <begin position="7"/>
        <end position="27"/>
    </location>
</feature>
<evidence type="ECO:0000255" key="1">
    <source>
        <dbReference type="HAMAP-Rule" id="MF_00522"/>
    </source>
</evidence>
<sequence>MQDLKTYLSVAPVLSTLWFGILAGLLIEINRLFPDALLFPFF</sequence>